<reference key="1">
    <citation type="journal article" date="2007" name="BMC Plant Biol.">
        <title>Complete plastid genome sequences suggest strong selection for retention of photosynthetic genes in the parasitic plant genus Cuscuta.</title>
        <authorList>
            <person name="McNeal J.R."/>
            <person name="Kuehl J.V."/>
            <person name="Boore J.L."/>
            <person name="dePamphilis C.W."/>
        </authorList>
    </citation>
    <scope>NUCLEOTIDE SEQUENCE [LARGE SCALE GENOMIC DNA]</scope>
</reference>
<protein>
    <recommendedName>
        <fullName evidence="1">Cytochrome b6-f complex subunit 5</fullName>
    </recommendedName>
    <alternativeName>
        <fullName evidence="1">Cytochrome b6-f complex subunit PetG</fullName>
    </alternativeName>
    <alternativeName>
        <fullName evidence="1">Cytochrome b6-f complex subunit V</fullName>
    </alternativeName>
</protein>
<comment type="function">
    <text evidence="1">Component of the cytochrome b6-f complex, which mediates electron transfer between photosystem II (PSII) and photosystem I (PSI), cyclic electron flow around PSI, and state transitions. PetG is required for either the stability or assembly of the cytochrome b6-f complex.</text>
</comment>
<comment type="subunit">
    <text evidence="1">The 4 large subunits of the cytochrome b6-f complex are cytochrome b6, subunit IV (17 kDa polypeptide, PetD), cytochrome f and the Rieske protein, while the 4 small subunits are PetG, PetL, PetM and PetN. The complex functions as a dimer.</text>
</comment>
<comment type="subcellular location">
    <subcellularLocation>
        <location evidence="1">Plastid</location>
        <location evidence="1">Chloroplast thylakoid membrane</location>
        <topology evidence="1">Single-pass membrane protein</topology>
    </subcellularLocation>
</comment>
<comment type="similarity">
    <text evidence="1">Belongs to the PetG family.</text>
</comment>
<keyword id="KW-0150">Chloroplast</keyword>
<keyword id="KW-0249">Electron transport</keyword>
<keyword id="KW-0472">Membrane</keyword>
<keyword id="KW-0602">Photosynthesis</keyword>
<keyword id="KW-0934">Plastid</keyword>
<keyword id="KW-0793">Thylakoid</keyword>
<keyword id="KW-0812">Transmembrane</keyword>
<keyword id="KW-1133">Transmembrane helix</keyword>
<keyword id="KW-0813">Transport</keyword>
<accession>A7Y3G4</accession>
<name>PETG_IPOPU</name>
<evidence type="ECO:0000255" key="1">
    <source>
        <dbReference type="HAMAP-Rule" id="MF_00432"/>
    </source>
</evidence>
<geneLocation type="chloroplast"/>
<sequence length="37" mass="4170">MIEVFLFGIVLGLIPITLAGLFVTAYLQYRRGDQLDL</sequence>
<gene>
    <name evidence="1" type="primary">petG</name>
</gene>
<feature type="chain" id="PRO_0000355392" description="Cytochrome b6-f complex subunit 5">
    <location>
        <begin position="1"/>
        <end position="37"/>
    </location>
</feature>
<feature type="transmembrane region" description="Helical" evidence="1">
    <location>
        <begin position="5"/>
        <end position="25"/>
    </location>
</feature>
<organism>
    <name type="scientific">Ipomoea purpurea</name>
    <name type="common">Common morning glory</name>
    <name type="synonym">Pharbitis purpurea</name>
    <dbReference type="NCBI Taxonomy" id="4121"/>
    <lineage>
        <taxon>Eukaryota</taxon>
        <taxon>Viridiplantae</taxon>
        <taxon>Streptophyta</taxon>
        <taxon>Embryophyta</taxon>
        <taxon>Tracheophyta</taxon>
        <taxon>Spermatophyta</taxon>
        <taxon>Magnoliopsida</taxon>
        <taxon>eudicotyledons</taxon>
        <taxon>Gunneridae</taxon>
        <taxon>Pentapetalae</taxon>
        <taxon>asterids</taxon>
        <taxon>lamiids</taxon>
        <taxon>Solanales</taxon>
        <taxon>Convolvulaceae</taxon>
        <taxon>Ipomoeeae</taxon>
        <taxon>Ipomoea</taxon>
    </lineage>
</organism>
<proteinExistence type="inferred from homology"/>
<dbReference type="EMBL" id="EU118126">
    <property type="protein sequence ID" value="ABV02367.1"/>
    <property type="molecule type" value="Genomic_DNA"/>
</dbReference>
<dbReference type="RefSeq" id="YP_001468327.1">
    <property type="nucleotide sequence ID" value="NC_009808.1"/>
</dbReference>
<dbReference type="SMR" id="A7Y3G4"/>
<dbReference type="GeneID" id="5601257"/>
<dbReference type="GO" id="GO:0009535">
    <property type="term" value="C:chloroplast thylakoid membrane"/>
    <property type="evidence" value="ECO:0007669"/>
    <property type="project" value="UniProtKB-SubCell"/>
</dbReference>
<dbReference type="GO" id="GO:0009512">
    <property type="term" value="C:cytochrome b6f complex"/>
    <property type="evidence" value="ECO:0007669"/>
    <property type="project" value="InterPro"/>
</dbReference>
<dbReference type="GO" id="GO:0045158">
    <property type="term" value="F:electron transporter, transferring electrons within cytochrome b6/f complex of photosystem II activity"/>
    <property type="evidence" value="ECO:0007669"/>
    <property type="project" value="UniProtKB-UniRule"/>
</dbReference>
<dbReference type="GO" id="GO:0017004">
    <property type="term" value="P:cytochrome complex assembly"/>
    <property type="evidence" value="ECO:0007669"/>
    <property type="project" value="UniProtKB-UniRule"/>
</dbReference>
<dbReference type="GO" id="GO:0015979">
    <property type="term" value="P:photosynthesis"/>
    <property type="evidence" value="ECO:0007669"/>
    <property type="project" value="UniProtKB-KW"/>
</dbReference>
<dbReference type="HAMAP" id="MF_00432">
    <property type="entry name" value="Cytb6_f_PetG"/>
    <property type="match status" value="1"/>
</dbReference>
<dbReference type="InterPro" id="IPR003683">
    <property type="entry name" value="Cyt_6/f_cplx_su5"/>
</dbReference>
<dbReference type="InterPro" id="IPR036099">
    <property type="entry name" value="Cyt_6/f_cplx_su5_sf"/>
</dbReference>
<dbReference type="NCBIfam" id="NF001907">
    <property type="entry name" value="PRK00665.1"/>
    <property type="match status" value="1"/>
</dbReference>
<dbReference type="Pfam" id="PF02529">
    <property type="entry name" value="PetG"/>
    <property type="match status" value="1"/>
</dbReference>
<dbReference type="PIRSF" id="PIRSF000034">
    <property type="entry name" value="Cyt_b6-f_V"/>
    <property type="match status" value="1"/>
</dbReference>
<dbReference type="SUPFAM" id="SSF103446">
    <property type="entry name" value="PetG subunit of the cytochrome b6f complex"/>
    <property type="match status" value="1"/>
</dbReference>